<dbReference type="EC" id="3.2.2.23" evidence="2"/>
<dbReference type="EC" id="4.2.99.18" evidence="2"/>
<dbReference type="EMBL" id="CP001096">
    <property type="protein sequence ID" value="ACE98649.1"/>
    <property type="molecule type" value="Genomic_DNA"/>
</dbReference>
<dbReference type="RefSeq" id="WP_012493911.1">
    <property type="nucleotide sequence ID" value="NC_011004.1"/>
</dbReference>
<dbReference type="SMR" id="B3Q620"/>
<dbReference type="KEGG" id="rpt:Rpal_0087"/>
<dbReference type="HOGENOM" id="CLU_038423_1_1_5"/>
<dbReference type="OrthoDB" id="9800855at2"/>
<dbReference type="Proteomes" id="UP000001725">
    <property type="component" value="Chromosome"/>
</dbReference>
<dbReference type="GO" id="GO:0034039">
    <property type="term" value="F:8-oxo-7,8-dihydroguanine DNA N-glycosylase activity"/>
    <property type="evidence" value="ECO:0007669"/>
    <property type="project" value="TreeGrafter"/>
</dbReference>
<dbReference type="GO" id="GO:0140078">
    <property type="term" value="F:class I DNA-(apurinic or apyrimidinic site) endonuclease activity"/>
    <property type="evidence" value="ECO:0007669"/>
    <property type="project" value="UniProtKB-EC"/>
</dbReference>
<dbReference type="GO" id="GO:0003684">
    <property type="term" value="F:damaged DNA binding"/>
    <property type="evidence" value="ECO:0007669"/>
    <property type="project" value="InterPro"/>
</dbReference>
<dbReference type="GO" id="GO:0008270">
    <property type="term" value="F:zinc ion binding"/>
    <property type="evidence" value="ECO:0007669"/>
    <property type="project" value="UniProtKB-UniRule"/>
</dbReference>
<dbReference type="GO" id="GO:0006284">
    <property type="term" value="P:base-excision repair"/>
    <property type="evidence" value="ECO:0007669"/>
    <property type="project" value="InterPro"/>
</dbReference>
<dbReference type="CDD" id="cd08966">
    <property type="entry name" value="EcFpg-like_N"/>
    <property type="match status" value="1"/>
</dbReference>
<dbReference type="FunFam" id="1.10.8.50:FF:000003">
    <property type="entry name" value="Formamidopyrimidine-DNA glycosylase"/>
    <property type="match status" value="1"/>
</dbReference>
<dbReference type="Gene3D" id="1.10.8.50">
    <property type="match status" value="1"/>
</dbReference>
<dbReference type="Gene3D" id="3.20.190.10">
    <property type="entry name" value="MutM-like, N-terminal"/>
    <property type="match status" value="1"/>
</dbReference>
<dbReference type="HAMAP" id="MF_00103">
    <property type="entry name" value="Fapy_DNA_glycosyl"/>
    <property type="match status" value="1"/>
</dbReference>
<dbReference type="InterPro" id="IPR015886">
    <property type="entry name" value="DNA_glyclase/AP_lyase_DNA-bd"/>
</dbReference>
<dbReference type="InterPro" id="IPR015887">
    <property type="entry name" value="DNA_glyclase_Znf_dom_DNA_BS"/>
</dbReference>
<dbReference type="InterPro" id="IPR020629">
    <property type="entry name" value="Formamido-pyr_DNA_Glyclase"/>
</dbReference>
<dbReference type="InterPro" id="IPR012319">
    <property type="entry name" value="FPG_cat"/>
</dbReference>
<dbReference type="InterPro" id="IPR035937">
    <property type="entry name" value="MutM-like_N-ter"/>
</dbReference>
<dbReference type="InterPro" id="IPR010979">
    <property type="entry name" value="Ribosomal_uS13-like_H2TH"/>
</dbReference>
<dbReference type="InterPro" id="IPR000214">
    <property type="entry name" value="Znf_DNA_glyclase/AP_lyase"/>
</dbReference>
<dbReference type="InterPro" id="IPR010663">
    <property type="entry name" value="Znf_FPG/IleRS"/>
</dbReference>
<dbReference type="NCBIfam" id="TIGR00577">
    <property type="entry name" value="fpg"/>
    <property type="match status" value="1"/>
</dbReference>
<dbReference type="NCBIfam" id="NF002211">
    <property type="entry name" value="PRK01103.1"/>
    <property type="match status" value="1"/>
</dbReference>
<dbReference type="PANTHER" id="PTHR22993">
    <property type="entry name" value="FORMAMIDOPYRIMIDINE-DNA GLYCOSYLASE"/>
    <property type="match status" value="1"/>
</dbReference>
<dbReference type="PANTHER" id="PTHR22993:SF9">
    <property type="entry name" value="FORMAMIDOPYRIMIDINE-DNA GLYCOSYLASE"/>
    <property type="match status" value="1"/>
</dbReference>
<dbReference type="Pfam" id="PF01149">
    <property type="entry name" value="Fapy_DNA_glyco"/>
    <property type="match status" value="1"/>
</dbReference>
<dbReference type="Pfam" id="PF06831">
    <property type="entry name" value="H2TH"/>
    <property type="match status" value="1"/>
</dbReference>
<dbReference type="Pfam" id="PF06827">
    <property type="entry name" value="zf-FPG_IleRS"/>
    <property type="match status" value="1"/>
</dbReference>
<dbReference type="SMART" id="SM00898">
    <property type="entry name" value="Fapy_DNA_glyco"/>
    <property type="match status" value="1"/>
</dbReference>
<dbReference type="SMART" id="SM01232">
    <property type="entry name" value="H2TH"/>
    <property type="match status" value="1"/>
</dbReference>
<dbReference type="SUPFAM" id="SSF57716">
    <property type="entry name" value="Glucocorticoid receptor-like (DNA-binding domain)"/>
    <property type="match status" value="1"/>
</dbReference>
<dbReference type="SUPFAM" id="SSF81624">
    <property type="entry name" value="N-terminal domain of MutM-like DNA repair proteins"/>
    <property type="match status" value="1"/>
</dbReference>
<dbReference type="SUPFAM" id="SSF46946">
    <property type="entry name" value="S13-like H2TH domain"/>
    <property type="match status" value="1"/>
</dbReference>
<dbReference type="PROSITE" id="PS51068">
    <property type="entry name" value="FPG_CAT"/>
    <property type="match status" value="1"/>
</dbReference>
<dbReference type="PROSITE" id="PS01242">
    <property type="entry name" value="ZF_FPG_1"/>
    <property type="match status" value="1"/>
</dbReference>
<dbReference type="PROSITE" id="PS51066">
    <property type="entry name" value="ZF_FPG_2"/>
    <property type="match status" value="1"/>
</dbReference>
<proteinExistence type="inferred from homology"/>
<sequence>MPELPEVETVRRGLQPAMEGFRIDRAVAHRENLRFPLQKDFAARLTGQTVTGLGRRAKYLLADLSSGDVLLMHLGMSGSFRVIGADGETTPGEFHYPRSEDRTHDHVVFEMASGARVVFNDPRRFGFMKVFPRSEIETEPHLKGLGPEPLGNAFDASLLAKACAGKQTSLKAALLDQRVVAGLGNIYVCEALFRAHLSPKRKASTLANRKEEPTDHAVRLTEAIREVLGEAIKAGGSSLRDHRQTSGELGYFQHAFKVYDREGKPCPTCGGTVQRFVQNGRSTFWCPKCQK</sequence>
<accession>B3Q620</accession>
<comment type="function">
    <text evidence="2">Involved in base excision repair of DNA damaged by oxidation or by mutagenic agents. Acts as a DNA glycosylase that recognizes and removes damaged bases. Has a preference for oxidized purines, such as 7,8-dihydro-8-oxoguanine (8-oxoG). Has AP (apurinic/apyrimidinic) lyase activity and introduces nicks in the DNA strand. Cleaves the DNA backbone by beta-delta elimination to generate a single-strand break at the site of the removed base with both 3'- and 5'-phosphates.</text>
</comment>
<comment type="catalytic activity">
    <reaction evidence="2">
        <text>Hydrolysis of DNA containing ring-opened 7-methylguanine residues, releasing 2,6-diamino-4-hydroxy-5-(N-methyl)formamidopyrimidine.</text>
        <dbReference type="EC" id="3.2.2.23"/>
    </reaction>
</comment>
<comment type="catalytic activity">
    <reaction evidence="2">
        <text>2'-deoxyribonucleotide-(2'-deoxyribose 5'-phosphate)-2'-deoxyribonucleotide-DNA = a 3'-end 2'-deoxyribonucleotide-(2,3-dehydro-2,3-deoxyribose 5'-phosphate)-DNA + a 5'-end 5'-phospho-2'-deoxyribonucleoside-DNA + H(+)</text>
        <dbReference type="Rhea" id="RHEA:66592"/>
        <dbReference type="Rhea" id="RHEA-COMP:13180"/>
        <dbReference type="Rhea" id="RHEA-COMP:16897"/>
        <dbReference type="Rhea" id="RHEA-COMP:17067"/>
        <dbReference type="ChEBI" id="CHEBI:15378"/>
        <dbReference type="ChEBI" id="CHEBI:136412"/>
        <dbReference type="ChEBI" id="CHEBI:157695"/>
        <dbReference type="ChEBI" id="CHEBI:167181"/>
        <dbReference type="EC" id="4.2.99.18"/>
    </reaction>
</comment>
<comment type="cofactor">
    <cofactor evidence="2">
        <name>Zn(2+)</name>
        <dbReference type="ChEBI" id="CHEBI:29105"/>
    </cofactor>
    <text evidence="2">Binds 1 zinc ion per subunit.</text>
</comment>
<comment type="subunit">
    <text evidence="2">Monomer.</text>
</comment>
<comment type="similarity">
    <text evidence="2">Belongs to the FPG family.</text>
</comment>
<gene>
    <name evidence="2" type="primary">mutM</name>
    <name evidence="2" type="synonym">fpg</name>
    <name type="ordered locus">Rpal_0087</name>
</gene>
<protein>
    <recommendedName>
        <fullName evidence="2">Formamidopyrimidine-DNA glycosylase</fullName>
        <shortName evidence="2">Fapy-DNA glycosylase</shortName>
        <ecNumber evidence="2">3.2.2.23</ecNumber>
    </recommendedName>
    <alternativeName>
        <fullName evidence="2">DNA-(apurinic or apyrimidinic site) lyase MutM</fullName>
        <shortName evidence="2">AP lyase MutM</shortName>
        <ecNumber evidence="2">4.2.99.18</ecNumber>
    </alternativeName>
</protein>
<organism>
    <name type="scientific">Rhodopseudomonas palustris (strain TIE-1)</name>
    <dbReference type="NCBI Taxonomy" id="395960"/>
    <lineage>
        <taxon>Bacteria</taxon>
        <taxon>Pseudomonadati</taxon>
        <taxon>Pseudomonadota</taxon>
        <taxon>Alphaproteobacteria</taxon>
        <taxon>Hyphomicrobiales</taxon>
        <taxon>Nitrobacteraceae</taxon>
        <taxon>Rhodopseudomonas</taxon>
    </lineage>
</organism>
<keyword id="KW-0227">DNA damage</keyword>
<keyword id="KW-0234">DNA repair</keyword>
<keyword id="KW-0238">DNA-binding</keyword>
<keyword id="KW-0326">Glycosidase</keyword>
<keyword id="KW-0378">Hydrolase</keyword>
<keyword id="KW-0456">Lyase</keyword>
<keyword id="KW-0479">Metal-binding</keyword>
<keyword id="KW-0511">Multifunctional enzyme</keyword>
<keyword id="KW-0862">Zinc</keyword>
<keyword id="KW-0863">Zinc-finger</keyword>
<reference key="1">
    <citation type="submission" date="2008-05" db="EMBL/GenBank/DDBJ databases">
        <title>Complete sequence of Rhodopseudomonas palustris TIE-1.</title>
        <authorList>
            <consortium name="US DOE Joint Genome Institute"/>
            <person name="Lucas S."/>
            <person name="Copeland A."/>
            <person name="Lapidus A."/>
            <person name="Glavina del Rio T."/>
            <person name="Dalin E."/>
            <person name="Tice H."/>
            <person name="Pitluck S."/>
            <person name="Chain P."/>
            <person name="Malfatti S."/>
            <person name="Shin M."/>
            <person name="Vergez L."/>
            <person name="Lang D."/>
            <person name="Schmutz J."/>
            <person name="Larimer F."/>
            <person name="Land M."/>
            <person name="Hauser L."/>
            <person name="Kyrpides N."/>
            <person name="Mikhailova N."/>
            <person name="Emerson D."/>
            <person name="Newman D.K."/>
            <person name="Roden E."/>
            <person name="Richardson P."/>
        </authorList>
    </citation>
    <scope>NUCLEOTIDE SEQUENCE [LARGE SCALE GENOMIC DNA]</scope>
    <source>
        <strain>TIE-1</strain>
    </source>
</reference>
<evidence type="ECO:0000250" key="1"/>
<evidence type="ECO:0000255" key="2">
    <source>
        <dbReference type="HAMAP-Rule" id="MF_00103"/>
    </source>
</evidence>
<feature type="initiator methionine" description="Removed" evidence="1">
    <location>
        <position position="1"/>
    </location>
</feature>
<feature type="chain" id="PRO_1000094069" description="Formamidopyrimidine-DNA glycosylase">
    <location>
        <begin position="2"/>
        <end position="291"/>
    </location>
</feature>
<feature type="zinc finger region" description="FPG-type" evidence="2">
    <location>
        <begin position="257"/>
        <end position="291"/>
    </location>
</feature>
<feature type="active site" description="Schiff-base intermediate with DNA" evidence="2">
    <location>
        <position position="2"/>
    </location>
</feature>
<feature type="active site" description="Proton donor" evidence="2">
    <location>
        <position position="3"/>
    </location>
</feature>
<feature type="active site" description="Proton donor; for beta-elimination activity" evidence="2">
    <location>
        <position position="58"/>
    </location>
</feature>
<feature type="active site" description="Proton donor; for delta-elimination activity" evidence="2">
    <location>
        <position position="281"/>
    </location>
</feature>
<feature type="binding site" evidence="2">
    <location>
        <position position="104"/>
    </location>
    <ligand>
        <name>DNA</name>
        <dbReference type="ChEBI" id="CHEBI:16991"/>
    </ligand>
</feature>
<feature type="binding site" evidence="2">
    <location>
        <position position="123"/>
    </location>
    <ligand>
        <name>DNA</name>
        <dbReference type="ChEBI" id="CHEBI:16991"/>
    </ligand>
</feature>
<feature type="binding site" evidence="2">
    <location>
        <position position="166"/>
    </location>
    <ligand>
        <name>DNA</name>
        <dbReference type="ChEBI" id="CHEBI:16991"/>
    </ligand>
</feature>
<name>FPG_RHOPT</name>